<name>PSBM_LOTJA</name>
<gene>
    <name evidence="1" type="primary">psbM</name>
</gene>
<sequence>MEVNILAFIATALFILVPTAFLLIIYVKTVSQSD</sequence>
<evidence type="ECO:0000255" key="1">
    <source>
        <dbReference type="HAMAP-Rule" id="MF_00438"/>
    </source>
</evidence>
<accession>P69528</accession>
<accession>P34833</accession>
<keyword id="KW-0150">Chloroplast</keyword>
<keyword id="KW-0472">Membrane</keyword>
<keyword id="KW-0602">Photosynthesis</keyword>
<keyword id="KW-0604">Photosystem II</keyword>
<keyword id="KW-0934">Plastid</keyword>
<keyword id="KW-0674">Reaction center</keyword>
<keyword id="KW-0793">Thylakoid</keyword>
<keyword id="KW-0812">Transmembrane</keyword>
<keyword id="KW-1133">Transmembrane helix</keyword>
<geneLocation type="chloroplast"/>
<feature type="chain" id="PRO_0000217558" description="Photosystem II reaction center protein M">
    <location>
        <begin position="1"/>
        <end position="34"/>
    </location>
</feature>
<feature type="transmembrane region" description="Helical" evidence="1">
    <location>
        <begin position="5"/>
        <end position="25"/>
    </location>
</feature>
<reference key="1">
    <citation type="journal article" date="2000" name="DNA Res.">
        <title>Complete structure of the chloroplast genome of a legume, Lotus japonicus.</title>
        <authorList>
            <person name="Kato T."/>
            <person name="Kaneko T."/>
            <person name="Sato S."/>
            <person name="Nakamura Y."/>
            <person name="Tabata S."/>
        </authorList>
    </citation>
    <scope>NUCLEOTIDE SEQUENCE [LARGE SCALE GENOMIC DNA]</scope>
    <source>
        <strain>cv. Miyakojima MG-20</strain>
    </source>
</reference>
<organism>
    <name type="scientific">Lotus japonicus</name>
    <name type="common">Lotus corniculatus var. japonicus</name>
    <dbReference type="NCBI Taxonomy" id="34305"/>
    <lineage>
        <taxon>Eukaryota</taxon>
        <taxon>Viridiplantae</taxon>
        <taxon>Streptophyta</taxon>
        <taxon>Embryophyta</taxon>
        <taxon>Tracheophyta</taxon>
        <taxon>Spermatophyta</taxon>
        <taxon>Magnoliopsida</taxon>
        <taxon>eudicotyledons</taxon>
        <taxon>Gunneridae</taxon>
        <taxon>Pentapetalae</taxon>
        <taxon>rosids</taxon>
        <taxon>fabids</taxon>
        <taxon>Fabales</taxon>
        <taxon>Fabaceae</taxon>
        <taxon>Papilionoideae</taxon>
        <taxon>50 kb inversion clade</taxon>
        <taxon>NPAAA clade</taxon>
        <taxon>Hologalegina</taxon>
        <taxon>robinioid clade</taxon>
        <taxon>Loteae</taxon>
        <taxon>Lotus</taxon>
    </lineage>
</organism>
<protein>
    <recommendedName>
        <fullName evidence="1">Photosystem II reaction center protein M</fullName>
        <shortName evidence="1">PSII-M</shortName>
    </recommendedName>
</protein>
<dbReference type="EMBL" id="AP002983">
    <property type="protein sequence ID" value="BAB33192.1"/>
    <property type="molecule type" value="Genomic_DNA"/>
</dbReference>
<dbReference type="RefSeq" id="NP_084794.1">
    <property type="nucleotide sequence ID" value="NC_002694.1"/>
</dbReference>
<dbReference type="SMR" id="P69528"/>
<dbReference type="GeneID" id="802924"/>
<dbReference type="GO" id="GO:0009535">
    <property type="term" value="C:chloroplast thylakoid membrane"/>
    <property type="evidence" value="ECO:0007669"/>
    <property type="project" value="UniProtKB-SubCell"/>
</dbReference>
<dbReference type="GO" id="GO:0009523">
    <property type="term" value="C:photosystem II"/>
    <property type="evidence" value="ECO:0007669"/>
    <property type="project" value="UniProtKB-KW"/>
</dbReference>
<dbReference type="GO" id="GO:0019684">
    <property type="term" value="P:photosynthesis, light reaction"/>
    <property type="evidence" value="ECO:0007669"/>
    <property type="project" value="InterPro"/>
</dbReference>
<dbReference type="HAMAP" id="MF_00438">
    <property type="entry name" value="PSII_PsbM"/>
    <property type="match status" value="1"/>
</dbReference>
<dbReference type="InterPro" id="IPR007826">
    <property type="entry name" value="PSII_PsbM"/>
</dbReference>
<dbReference type="InterPro" id="IPR037269">
    <property type="entry name" value="PSII_PsbM_sf"/>
</dbReference>
<dbReference type="NCBIfam" id="TIGR03038">
    <property type="entry name" value="PS_II_psbM"/>
    <property type="match status" value="1"/>
</dbReference>
<dbReference type="PANTHER" id="PTHR35774">
    <property type="entry name" value="PHOTOSYSTEM II REACTION CENTER PROTEIN M"/>
    <property type="match status" value="1"/>
</dbReference>
<dbReference type="PANTHER" id="PTHR35774:SF1">
    <property type="entry name" value="PHOTOSYSTEM II REACTION CENTER PROTEIN M"/>
    <property type="match status" value="1"/>
</dbReference>
<dbReference type="Pfam" id="PF05151">
    <property type="entry name" value="PsbM"/>
    <property type="match status" value="1"/>
</dbReference>
<dbReference type="SUPFAM" id="SSF161033">
    <property type="entry name" value="Photosystem II reaction center protein M, PsbM"/>
    <property type="match status" value="1"/>
</dbReference>
<proteinExistence type="inferred from homology"/>
<comment type="function">
    <text evidence="1">One of the components of the core complex of photosystem II (PSII). PSII is a light-driven water:plastoquinone oxidoreductase that uses light energy to abstract electrons from H(2)O, generating O(2) and a proton gradient subsequently used for ATP formation. It consists of a core antenna complex that captures photons, and an electron transfer chain that converts photonic excitation into a charge separation. This subunit is found at the monomer-monomer interface.</text>
</comment>
<comment type="subunit">
    <text evidence="1">PSII is composed of 1 copy each of membrane proteins PsbA, PsbB, PsbC, PsbD, PsbE, PsbF, PsbH, PsbI, PsbJ, PsbK, PsbL, PsbM, PsbT, PsbX, PsbY, PsbZ, Psb30/Ycf12, at least 3 peripheral proteins of the oxygen-evolving complex and a large number of cofactors. It forms dimeric complexes.</text>
</comment>
<comment type="subcellular location">
    <subcellularLocation>
        <location evidence="1">Plastid</location>
        <location evidence="1">Chloroplast thylakoid membrane</location>
        <topology evidence="1">Single-pass membrane protein</topology>
    </subcellularLocation>
</comment>
<comment type="similarity">
    <text evidence="1">Belongs to the PsbM family.</text>
</comment>